<organism>
    <name type="scientific">Arabidopsis thaliana</name>
    <name type="common">Mouse-ear cress</name>
    <dbReference type="NCBI Taxonomy" id="3702"/>
    <lineage>
        <taxon>Eukaryota</taxon>
        <taxon>Viridiplantae</taxon>
        <taxon>Streptophyta</taxon>
        <taxon>Embryophyta</taxon>
        <taxon>Tracheophyta</taxon>
        <taxon>Spermatophyta</taxon>
        <taxon>Magnoliopsida</taxon>
        <taxon>eudicotyledons</taxon>
        <taxon>Gunneridae</taxon>
        <taxon>Pentapetalae</taxon>
        <taxon>rosids</taxon>
        <taxon>malvids</taxon>
        <taxon>Brassicales</taxon>
        <taxon>Brassicaceae</taxon>
        <taxon>Camelineae</taxon>
        <taxon>Arabidopsis</taxon>
    </lineage>
</organism>
<gene>
    <name type="primary">GLN1-1</name>
    <name type="ordered locus">At5g37600</name>
    <name type="ORF">K12B20.50</name>
</gene>
<keyword id="KW-0007">Acetylation</keyword>
<keyword id="KW-0067">ATP-binding</keyword>
<keyword id="KW-0963">Cytoplasm</keyword>
<keyword id="KW-0436">Ligase</keyword>
<keyword id="KW-0535">Nitrogen fixation</keyword>
<keyword id="KW-0547">Nucleotide-binding</keyword>
<keyword id="KW-0597">Phosphoprotein</keyword>
<keyword id="KW-1185">Reference proteome</keyword>
<evidence type="ECO:0000250" key="1">
    <source>
        <dbReference type="UniProtKB" id="P16580"/>
    </source>
</evidence>
<evidence type="ECO:0000250" key="2">
    <source>
        <dbReference type="UniProtKB" id="Q43127"/>
    </source>
</evidence>
<evidence type="ECO:0000250" key="3">
    <source>
        <dbReference type="UniProtKB" id="Q8LCE1"/>
    </source>
</evidence>
<evidence type="ECO:0000255" key="4">
    <source>
        <dbReference type="PROSITE-ProRule" id="PRU01330"/>
    </source>
</evidence>
<evidence type="ECO:0000255" key="5">
    <source>
        <dbReference type="PROSITE-ProRule" id="PRU01331"/>
    </source>
</evidence>
<evidence type="ECO:0000256" key="6">
    <source>
        <dbReference type="SAM" id="MobiDB-lite"/>
    </source>
</evidence>
<evidence type="ECO:0000269" key="7">
    <source>
    </source>
</evidence>
<evidence type="ECO:0000269" key="8">
    <source>
    </source>
</evidence>
<evidence type="ECO:0000269" key="9">
    <source>
    </source>
</evidence>
<evidence type="ECO:0000269" key="10">
    <source>
    </source>
</evidence>
<evidence type="ECO:0000303" key="11">
    <source>
    </source>
</evidence>
<evidence type="ECO:0000305" key="12"/>
<evidence type="ECO:0000305" key="13">
    <source>
    </source>
</evidence>
<evidence type="ECO:0007744" key="14">
    <source>
    </source>
</evidence>
<feature type="initiator methionine" description="Removed" evidence="14">
    <location>
        <position position="1"/>
    </location>
</feature>
<feature type="chain" id="PRO_0000239818" description="Glutamine synthetase cytosolic isozyme 1-1">
    <location>
        <begin position="2"/>
        <end position="356"/>
    </location>
</feature>
<feature type="domain" description="GS beta-grasp" evidence="4">
    <location>
        <begin position="19"/>
        <end position="99"/>
    </location>
</feature>
<feature type="domain" description="GS catalytic" evidence="5">
    <location>
        <begin position="106"/>
        <end position="356"/>
    </location>
</feature>
<feature type="region of interest" description="Disordered" evidence="6">
    <location>
        <begin position="36"/>
        <end position="62"/>
    </location>
</feature>
<feature type="modified residue" description="N-acetylserine" evidence="14">
    <location>
        <position position="2"/>
    </location>
</feature>
<feature type="modified residue" description="Phosphoserine" evidence="3">
    <location>
        <position position="2"/>
    </location>
</feature>
<feature type="modified residue" description="Phosphoserine" evidence="2">
    <location>
        <position position="48"/>
    </location>
</feature>
<accession>Q56WN1</accession>
<accession>Q9FHR0</accession>
<comment type="function">
    <text evidence="8">High-affinity glutamine synthetase which catalyzes the synthesis of glutamine from ammonium and glutamate (PubMed:14757761). May contribute to the homeostatic control of glutamine synthesis in roots.</text>
</comment>
<comment type="catalytic activity">
    <reaction evidence="8">
        <text>L-glutamate + NH4(+) + ATP = L-glutamine + ADP + phosphate + H(+)</text>
        <dbReference type="Rhea" id="RHEA:16169"/>
        <dbReference type="ChEBI" id="CHEBI:15378"/>
        <dbReference type="ChEBI" id="CHEBI:28938"/>
        <dbReference type="ChEBI" id="CHEBI:29985"/>
        <dbReference type="ChEBI" id="CHEBI:30616"/>
        <dbReference type="ChEBI" id="CHEBI:43474"/>
        <dbReference type="ChEBI" id="CHEBI:58359"/>
        <dbReference type="ChEBI" id="CHEBI:456216"/>
        <dbReference type="EC" id="6.3.1.2"/>
    </reaction>
    <physiologicalReaction direction="left-to-right" evidence="13">
        <dbReference type="Rhea" id="RHEA:16170"/>
    </physiologicalReaction>
</comment>
<comment type="biophysicochemical properties">
    <kinetics>
        <KM evidence="8">1.1 mM for glutamate</KM>
        <KM evidence="8">10 uM for ammonium</KM>
        <KM evidence="8">300 uM for ATP</KM>
        <Vmax evidence="8">29.3 nmol/sec/mg enzyme with glutamate as substrate</Vmax>
        <Vmax evidence="8">27.4 nmol/sec/mg enzyme with ammonium as substrate</Vmax>
        <Vmax evidence="8">21.4 nmol/sec/mg enzyme with ATP as substrate</Vmax>
        <text>The KM value for ammonium is smaller than 10 uM. Measured at pH 7.8 and 30 degrees Celsius for all experiments.</text>
    </kinetics>
</comment>
<comment type="subunit">
    <text evidence="1 9 10">Homooctamer (By similarity). Interacts with CRK3 and GRF3.</text>
</comment>
<comment type="interaction">
    <interactant intactId="EBI-1538766">
        <id>Q56WN1</id>
    </interactant>
    <interactant intactId="EBI-1538748">
        <id>Q9ZUZ2</id>
        <label>CRK3</label>
    </interactant>
    <organismsDiffer>false</organismsDiffer>
    <experiments>7</experiments>
</comment>
<comment type="subcellular location">
    <subcellularLocation>
        <location evidence="9">Cytoplasm</location>
    </subcellularLocation>
</comment>
<comment type="tissue specificity">
    <text evidence="8 9">Expressed in root tips, root hairs and epidermis. Ubiquitously expressed with higher levels in siliques and roots.</text>
</comment>
<comment type="induction">
    <text evidence="7 8 9">By nitrogen deprivation, sucrose, glucose and fructose. Down-regulated by ammonium supply. Induced during leaf senescence.</text>
</comment>
<comment type="PTM">
    <text evidence="9">Phosphorylated by CRK3.</text>
</comment>
<comment type="similarity">
    <text evidence="12">Belongs to the glutamine synthetase family.</text>
</comment>
<sequence>MSLVSDLINLNLSDSTDKIIAEYIWVGGSGMDMRSKARTLPGPVTDPSQLPKWNYDGSSTGQAPGEDSEVILYPQAIFKDPFRRGNNILVMCDAYTPAGEPIPTNKRHAAAKVFSNPDVAAEVPWYGIEQEYTLLQKDVKWPVGWPIGGYPGPQGPYYCGIGADKSFGRDVVDSHYKACLYAGINISGINGEVMPGQWEFQVGPAVGISAADEIWVARYILERITEIAGVVVSFDPKPIPGDWNGAGAHCNYSTKSMREEGGYEIIKKAIDKLGLRHKEHIAAYGEGNERRLTGHHETADINTFLWGVANRGASIRVGRDTEKEGKGYFEDRRPASNMDPYIVTSMIAETTILWNP</sequence>
<proteinExistence type="evidence at protein level"/>
<dbReference type="EC" id="6.3.1.2" evidence="8"/>
<dbReference type="EMBL" id="AB018107">
    <property type="protein sequence ID" value="BAB08306.1"/>
    <property type="molecule type" value="Genomic_DNA"/>
</dbReference>
<dbReference type="EMBL" id="CP002688">
    <property type="protein sequence ID" value="AED94209.1"/>
    <property type="molecule type" value="Genomic_DNA"/>
</dbReference>
<dbReference type="EMBL" id="AF419608">
    <property type="protein sequence ID" value="AAL31940.1"/>
    <property type="molecule type" value="mRNA"/>
</dbReference>
<dbReference type="EMBL" id="AF428386">
    <property type="protein sequence ID" value="AAL16154.1"/>
    <property type="molecule type" value="mRNA"/>
</dbReference>
<dbReference type="EMBL" id="AY079113">
    <property type="protein sequence ID" value="AAL84997.1"/>
    <property type="molecule type" value="mRNA"/>
</dbReference>
<dbReference type="EMBL" id="BT000753">
    <property type="protein sequence ID" value="AAN31893.1"/>
    <property type="molecule type" value="mRNA"/>
</dbReference>
<dbReference type="EMBL" id="AK222005">
    <property type="protein sequence ID" value="BAD94626.1"/>
    <property type="molecule type" value="mRNA"/>
</dbReference>
<dbReference type="PIR" id="S18601">
    <property type="entry name" value="S18601"/>
</dbReference>
<dbReference type="SMR" id="Q56WN1"/>
<dbReference type="BioGRID" id="18989">
    <property type="interactions" value="4"/>
</dbReference>
<dbReference type="FunCoup" id="Q56WN1">
    <property type="interactions" value="2266"/>
</dbReference>
<dbReference type="IntAct" id="Q56WN1">
    <property type="interactions" value="2"/>
</dbReference>
<dbReference type="STRING" id="3702.Q56WN1"/>
<dbReference type="iPTMnet" id="Q56WN1"/>
<dbReference type="PaxDb" id="3702-AT5G37600.1"/>
<dbReference type="ProteomicsDB" id="248581"/>
<dbReference type="EnsemblPlants" id="AT5G37600.1">
    <property type="protein sequence ID" value="AT5G37600.1"/>
    <property type="gene ID" value="AT5G37600"/>
</dbReference>
<dbReference type="GeneID" id="833738"/>
<dbReference type="Gramene" id="AT5G37600.1">
    <property type="protein sequence ID" value="AT5G37600.1"/>
    <property type="gene ID" value="AT5G37600"/>
</dbReference>
<dbReference type="KEGG" id="ath:AT5G37600"/>
<dbReference type="Araport" id="AT5G37600"/>
<dbReference type="TAIR" id="AT5G37600">
    <property type="gene designation" value="GSR 1"/>
</dbReference>
<dbReference type="eggNOG" id="KOG0683">
    <property type="taxonomic scope" value="Eukaryota"/>
</dbReference>
<dbReference type="HOGENOM" id="CLU_036762_0_1_1"/>
<dbReference type="InParanoid" id="Q56WN1"/>
<dbReference type="OMA" id="TKDYADH"/>
<dbReference type="OrthoDB" id="1936100at2759"/>
<dbReference type="PhylomeDB" id="Q56WN1"/>
<dbReference type="BRENDA" id="6.3.1.2">
    <property type="organism ID" value="399"/>
</dbReference>
<dbReference type="SABIO-RK" id="Q56WN1"/>
<dbReference type="CD-CODE" id="4299E36E">
    <property type="entry name" value="Nucleolus"/>
</dbReference>
<dbReference type="PRO" id="PR:Q56WN1"/>
<dbReference type="Proteomes" id="UP000006548">
    <property type="component" value="Chromosome 5"/>
</dbReference>
<dbReference type="ExpressionAtlas" id="Q56WN1">
    <property type="expression patterns" value="baseline and differential"/>
</dbReference>
<dbReference type="GO" id="GO:0005829">
    <property type="term" value="C:cytosol"/>
    <property type="evidence" value="ECO:0007005"/>
    <property type="project" value="TAIR"/>
</dbReference>
<dbReference type="GO" id="GO:0022626">
    <property type="term" value="C:cytosolic ribosome"/>
    <property type="evidence" value="ECO:0007005"/>
    <property type="project" value="TAIR"/>
</dbReference>
<dbReference type="GO" id="GO:0009505">
    <property type="term" value="C:plant-type cell wall"/>
    <property type="evidence" value="ECO:0007005"/>
    <property type="project" value="TAIR"/>
</dbReference>
<dbReference type="GO" id="GO:0005886">
    <property type="term" value="C:plasma membrane"/>
    <property type="evidence" value="ECO:0007005"/>
    <property type="project" value="TAIR"/>
</dbReference>
<dbReference type="GO" id="GO:0009506">
    <property type="term" value="C:plasmodesma"/>
    <property type="evidence" value="ECO:0007005"/>
    <property type="project" value="TAIR"/>
</dbReference>
<dbReference type="GO" id="GO:0009536">
    <property type="term" value="C:plastid"/>
    <property type="evidence" value="ECO:0007005"/>
    <property type="project" value="TAIR"/>
</dbReference>
<dbReference type="GO" id="GO:0005524">
    <property type="term" value="F:ATP binding"/>
    <property type="evidence" value="ECO:0007669"/>
    <property type="project" value="UniProtKB-KW"/>
</dbReference>
<dbReference type="GO" id="GO:0005507">
    <property type="term" value="F:copper ion binding"/>
    <property type="evidence" value="ECO:0007005"/>
    <property type="project" value="TAIR"/>
</dbReference>
<dbReference type="GO" id="GO:0004356">
    <property type="term" value="F:glutamine synthetase activity"/>
    <property type="evidence" value="ECO:0000314"/>
    <property type="project" value="TAIR"/>
</dbReference>
<dbReference type="GO" id="GO:0006542">
    <property type="term" value="P:glutamine biosynthetic process"/>
    <property type="evidence" value="ECO:0007669"/>
    <property type="project" value="InterPro"/>
</dbReference>
<dbReference type="GO" id="GO:0010150">
    <property type="term" value="P:leaf senescence"/>
    <property type="evidence" value="ECO:0000270"/>
    <property type="project" value="UniProtKB"/>
</dbReference>
<dbReference type="GO" id="GO:0042128">
    <property type="term" value="P:nitrate assimilation"/>
    <property type="evidence" value="ECO:0000304"/>
    <property type="project" value="TAIR"/>
</dbReference>
<dbReference type="FunFam" id="3.30.590.10:FF:000004">
    <property type="entry name" value="Glutamine synthetase"/>
    <property type="match status" value="1"/>
</dbReference>
<dbReference type="FunFam" id="3.10.20.70:FF:000003">
    <property type="entry name" value="Glutamine synthetase, chloroplastic"/>
    <property type="match status" value="1"/>
</dbReference>
<dbReference type="Gene3D" id="3.10.20.70">
    <property type="entry name" value="Glutamine synthetase, N-terminal domain"/>
    <property type="match status" value="1"/>
</dbReference>
<dbReference type="Gene3D" id="3.30.590.10">
    <property type="entry name" value="Glutamine synthetase/guanido kinase, catalytic domain"/>
    <property type="match status" value="1"/>
</dbReference>
<dbReference type="InterPro" id="IPR008147">
    <property type="entry name" value="Gln_synt_N"/>
</dbReference>
<dbReference type="InterPro" id="IPR036651">
    <property type="entry name" value="Gln_synt_N_sf"/>
</dbReference>
<dbReference type="InterPro" id="IPR014746">
    <property type="entry name" value="Gln_synth/guanido_kin_cat_dom"/>
</dbReference>
<dbReference type="InterPro" id="IPR008146">
    <property type="entry name" value="Gln_synth_cat_dom"/>
</dbReference>
<dbReference type="InterPro" id="IPR027303">
    <property type="entry name" value="Gln_synth_gly_rich_site"/>
</dbReference>
<dbReference type="InterPro" id="IPR027302">
    <property type="entry name" value="Gln_synth_N_conserv_site"/>
</dbReference>
<dbReference type="InterPro" id="IPR050292">
    <property type="entry name" value="Glutamine_Synthetase"/>
</dbReference>
<dbReference type="PANTHER" id="PTHR20852">
    <property type="entry name" value="GLUTAMINE SYNTHETASE"/>
    <property type="match status" value="1"/>
</dbReference>
<dbReference type="PANTHER" id="PTHR20852:SF93">
    <property type="entry name" value="GLUTAMINE SYNTHETASE CYTOSOLIC ISOZYME 1-1"/>
    <property type="match status" value="1"/>
</dbReference>
<dbReference type="Pfam" id="PF00120">
    <property type="entry name" value="Gln-synt_C"/>
    <property type="match status" value="1"/>
</dbReference>
<dbReference type="Pfam" id="PF03951">
    <property type="entry name" value="Gln-synt_N"/>
    <property type="match status" value="1"/>
</dbReference>
<dbReference type="SMART" id="SM01230">
    <property type="entry name" value="Gln-synt_C"/>
    <property type="match status" value="1"/>
</dbReference>
<dbReference type="SUPFAM" id="SSF54368">
    <property type="entry name" value="Glutamine synthetase, N-terminal domain"/>
    <property type="match status" value="1"/>
</dbReference>
<dbReference type="SUPFAM" id="SSF55931">
    <property type="entry name" value="Glutamine synthetase/guanido kinase"/>
    <property type="match status" value="1"/>
</dbReference>
<dbReference type="PROSITE" id="PS00180">
    <property type="entry name" value="GLNA_1"/>
    <property type="match status" value="1"/>
</dbReference>
<dbReference type="PROSITE" id="PS00181">
    <property type="entry name" value="GLNA_ATP"/>
    <property type="match status" value="1"/>
</dbReference>
<dbReference type="PROSITE" id="PS51986">
    <property type="entry name" value="GS_BETA_GRASP"/>
    <property type="match status" value="1"/>
</dbReference>
<dbReference type="PROSITE" id="PS51987">
    <property type="entry name" value="GS_CATALYTIC"/>
    <property type="match status" value="1"/>
</dbReference>
<protein>
    <recommendedName>
        <fullName>Glutamine synthetase cytosolic isozyme 1-1</fullName>
        <ecNumber evidence="8">6.3.1.2</ecNumber>
    </recommendedName>
    <alternativeName>
        <fullName evidence="11">Glutamate--ammonia ligase GLN1;1</fullName>
        <shortName evidence="11">GLN1;1</shortName>
    </alternativeName>
</protein>
<name>GLN11_ARATH</name>
<reference key="1">
    <citation type="journal article" date="1999" name="DNA Res.">
        <title>Structural analysis of Arabidopsis thaliana chromosome 5. IX. Sequence features of the regions of 1,011,550 bp covered by seventeen P1 and TAC clones.</title>
        <authorList>
            <person name="Kaneko T."/>
            <person name="Katoh T."/>
            <person name="Sato S."/>
            <person name="Nakamura Y."/>
            <person name="Asamizu E."/>
            <person name="Kotani H."/>
            <person name="Miyajima N."/>
            <person name="Tabata S."/>
        </authorList>
    </citation>
    <scope>NUCLEOTIDE SEQUENCE [LARGE SCALE GENOMIC DNA]</scope>
    <source>
        <strain>cv. Columbia</strain>
    </source>
</reference>
<reference key="2">
    <citation type="journal article" date="2017" name="Plant J.">
        <title>Araport11: a complete reannotation of the Arabidopsis thaliana reference genome.</title>
        <authorList>
            <person name="Cheng C.Y."/>
            <person name="Krishnakumar V."/>
            <person name="Chan A.P."/>
            <person name="Thibaud-Nissen F."/>
            <person name="Schobel S."/>
            <person name="Town C.D."/>
        </authorList>
    </citation>
    <scope>GENOME REANNOTATION</scope>
    <source>
        <strain>cv. Columbia</strain>
    </source>
</reference>
<reference key="3">
    <citation type="journal article" date="2003" name="Science">
        <title>Empirical analysis of transcriptional activity in the Arabidopsis genome.</title>
        <authorList>
            <person name="Yamada K."/>
            <person name="Lim J."/>
            <person name="Dale J.M."/>
            <person name="Chen H."/>
            <person name="Shinn P."/>
            <person name="Palm C.J."/>
            <person name="Southwick A.M."/>
            <person name="Wu H.C."/>
            <person name="Kim C.J."/>
            <person name="Nguyen M."/>
            <person name="Pham P.K."/>
            <person name="Cheuk R.F."/>
            <person name="Karlin-Newmann G."/>
            <person name="Liu S.X."/>
            <person name="Lam B."/>
            <person name="Sakano H."/>
            <person name="Wu T."/>
            <person name="Yu G."/>
            <person name="Miranda M."/>
            <person name="Quach H.L."/>
            <person name="Tripp M."/>
            <person name="Chang C.H."/>
            <person name="Lee J.M."/>
            <person name="Toriumi M.J."/>
            <person name="Chan M.M."/>
            <person name="Tang C.C."/>
            <person name="Onodera C.S."/>
            <person name="Deng J.M."/>
            <person name="Akiyama K."/>
            <person name="Ansari Y."/>
            <person name="Arakawa T."/>
            <person name="Banh J."/>
            <person name="Banno F."/>
            <person name="Bowser L."/>
            <person name="Brooks S.Y."/>
            <person name="Carninci P."/>
            <person name="Chao Q."/>
            <person name="Choy N."/>
            <person name="Enju A."/>
            <person name="Goldsmith A.D."/>
            <person name="Gurjal M."/>
            <person name="Hansen N.F."/>
            <person name="Hayashizaki Y."/>
            <person name="Johnson-Hopson C."/>
            <person name="Hsuan V.W."/>
            <person name="Iida K."/>
            <person name="Karnes M."/>
            <person name="Khan S."/>
            <person name="Koesema E."/>
            <person name="Ishida J."/>
            <person name="Jiang P.X."/>
            <person name="Jones T."/>
            <person name="Kawai J."/>
            <person name="Kamiya A."/>
            <person name="Meyers C."/>
            <person name="Nakajima M."/>
            <person name="Narusaka M."/>
            <person name="Seki M."/>
            <person name="Sakurai T."/>
            <person name="Satou M."/>
            <person name="Tamse R."/>
            <person name="Vaysberg M."/>
            <person name="Wallender E.K."/>
            <person name="Wong C."/>
            <person name="Yamamura Y."/>
            <person name="Yuan S."/>
            <person name="Shinozaki K."/>
            <person name="Davis R.W."/>
            <person name="Theologis A."/>
            <person name="Ecker J.R."/>
        </authorList>
    </citation>
    <scope>NUCLEOTIDE SEQUENCE [LARGE SCALE MRNA]</scope>
    <source>
        <strain>cv. Columbia</strain>
    </source>
</reference>
<reference key="4">
    <citation type="submission" date="2005-03" db="EMBL/GenBank/DDBJ databases">
        <title>Large-scale analysis of RIKEN Arabidopsis full-length (RAFL) cDNAs.</title>
        <authorList>
            <person name="Totoki Y."/>
            <person name="Seki M."/>
            <person name="Ishida J."/>
            <person name="Nakajima M."/>
            <person name="Enju A."/>
            <person name="Kamiya A."/>
            <person name="Narusaka M."/>
            <person name="Shin-i T."/>
            <person name="Nakagawa M."/>
            <person name="Sakamoto N."/>
            <person name="Oishi K."/>
            <person name="Kohara Y."/>
            <person name="Kobayashi M."/>
            <person name="Toyoda A."/>
            <person name="Sakaki Y."/>
            <person name="Sakurai T."/>
            <person name="Iida K."/>
            <person name="Akiyama K."/>
            <person name="Satou M."/>
            <person name="Toyoda T."/>
            <person name="Konagaya A."/>
            <person name="Carninci P."/>
            <person name="Kawai J."/>
            <person name="Hayashizaki Y."/>
            <person name="Shinozaki K."/>
        </authorList>
    </citation>
    <scope>NUCLEOTIDE SEQUENCE [LARGE SCALE MRNA] OF 145-356</scope>
    <source>
        <strain>cv. Columbia</strain>
    </source>
</reference>
<reference key="5">
    <citation type="journal article" date="1999" name="Plant Physiol.">
        <title>Carbon and amino acids reciprocally modulate the expression of glutamine synthetase in Arabidopsis.</title>
        <authorList>
            <person name="Oliveira I.C."/>
            <person name="Coruzzi G.M."/>
        </authorList>
    </citation>
    <scope>INDUCTION</scope>
</reference>
<reference key="6">
    <citation type="journal article" date="2004" name="J. Biol. Chem.">
        <title>Kinetic properties and ammonium-dependent regulation of cytosolic isoenzymes of glutamine synthetase in Arabidopsis.</title>
        <authorList>
            <person name="Ishiyama K."/>
            <person name="Inoue E."/>
            <person name="Watanabe-Takahashi A."/>
            <person name="Obara M."/>
            <person name="Yamaya T."/>
            <person name="Takahashi H."/>
        </authorList>
    </citation>
    <scope>FUNCTION</scope>
    <scope>CATALYTIC ACTIVITY</scope>
    <scope>BIOPHYSICOCHEMICAL PROPERTIES</scope>
    <scope>TISSUE SPECIFICITY</scope>
    <scope>INDUCTION</scope>
</reference>
<reference key="7">
    <citation type="journal article" date="2006" name="Biochem. Biophys. Res. Commun.">
        <title>Arabidopsis cytosolic glutamine synthetase AtGLN1;1 is a potential substrate of AtCRK3 involved in leaf senescence.</title>
        <authorList>
            <person name="Li R.-J."/>
            <person name="Hua W."/>
            <person name="Lu Y.-T."/>
        </authorList>
    </citation>
    <scope>INTERACTION WITH CRK3</scope>
    <scope>PHOSPHORYLATION BY CRK3</scope>
    <scope>INDUCTION BY LEAF SENESCENCE</scope>
    <scope>TISSUE SPECIFICITY</scope>
    <scope>SUBCELLULAR LOCATION</scope>
</reference>
<reference key="8">
    <citation type="journal article" date="2011" name="FEBS Lett.">
        <title>14-3-3 proteins fine-tune plant nutrient metabolism.</title>
        <authorList>
            <person name="Shin R."/>
            <person name="Jez J.M."/>
            <person name="Basra A."/>
            <person name="Zhang B."/>
            <person name="Schachtman D.P."/>
        </authorList>
    </citation>
    <scope>INTERACTION WITH GRF3</scope>
</reference>
<reference key="9">
    <citation type="journal article" date="2012" name="Mol. Cell. Proteomics">
        <title>Comparative large-scale characterisation of plant vs. mammal proteins reveals similar and idiosyncratic N-alpha acetylation features.</title>
        <authorList>
            <person name="Bienvenut W.V."/>
            <person name="Sumpton D."/>
            <person name="Martinez A."/>
            <person name="Lilla S."/>
            <person name="Espagne C."/>
            <person name="Meinnel T."/>
            <person name="Giglione C."/>
        </authorList>
    </citation>
    <scope>ACETYLATION [LARGE SCALE ANALYSIS] AT SER-2</scope>
    <scope>CLEAVAGE OF INITIATOR METHIONINE [LARGE SCALE ANALYSIS]</scope>
    <scope>IDENTIFICATION BY MASS SPECTROMETRY [LARGE SCALE ANALYSIS]</scope>
</reference>